<organism>
    <name type="scientific">Rensonia salvadorica</name>
    <dbReference type="NCBI Taxonomy" id="183072"/>
    <lineage>
        <taxon>Eukaryota</taxon>
        <taxon>Viridiplantae</taxon>
        <taxon>Streptophyta</taxon>
        <taxon>Embryophyta</taxon>
        <taxon>Tracheophyta</taxon>
        <taxon>Spermatophyta</taxon>
        <taxon>Magnoliopsida</taxon>
        <taxon>eudicotyledons</taxon>
        <taxon>Gunneridae</taxon>
        <taxon>Pentapetalae</taxon>
        <taxon>asterids</taxon>
        <taxon>campanulids</taxon>
        <taxon>Asterales</taxon>
        <taxon>Asteraceae</taxon>
        <taxon>Asteroideae</taxon>
        <taxon>Heliantheae alliance</taxon>
        <taxon>Heliantheae</taxon>
        <taxon>Rensonia</taxon>
    </lineage>
</organism>
<feature type="chain" id="PRO_0000250843" description="NAD(P)H-quinone oxidoreductase subunit I, chloroplastic">
    <location>
        <begin position="1"/>
        <end position="166"/>
    </location>
</feature>
<feature type="domain" description="4Fe-4S ferredoxin-type 1" evidence="1">
    <location>
        <begin position="55"/>
        <end position="84"/>
    </location>
</feature>
<feature type="domain" description="4Fe-4S ferredoxin-type 2" evidence="1">
    <location>
        <begin position="95"/>
        <end position="124"/>
    </location>
</feature>
<feature type="binding site" evidence="1">
    <location>
        <position position="64"/>
    </location>
    <ligand>
        <name>[4Fe-4S] cluster</name>
        <dbReference type="ChEBI" id="CHEBI:49883"/>
        <label>1</label>
    </ligand>
</feature>
<feature type="binding site" evidence="1">
    <location>
        <position position="67"/>
    </location>
    <ligand>
        <name>[4Fe-4S] cluster</name>
        <dbReference type="ChEBI" id="CHEBI:49883"/>
        <label>1</label>
    </ligand>
</feature>
<feature type="binding site" evidence="1">
    <location>
        <position position="70"/>
    </location>
    <ligand>
        <name>[4Fe-4S] cluster</name>
        <dbReference type="ChEBI" id="CHEBI:49883"/>
        <label>1</label>
    </ligand>
</feature>
<feature type="binding site" evidence="1">
    <location>
        <position position="74"/>
    </location>
    <ligand>
        <name>[4Fe-4S] cluster</name>
        <dbReference type="ChEBI" id="CHEBI:49883"/>
        <label>2</label>
    </ligand>
</feature>
<feature type="binding site" evidence="1">
    <location>
        <position position="104"/>
    </location>
    <ligand>
        <name>[4Fe-4S] cluster</name>
        <dbReference type="ChEBI" id="CHEBI:49883"/>
        <label>2</label>
    </ligand>
</feature>
<feature type="binding site" evidence="1">
    <location>
        <position position="107"/>
    </location>
    <ligand>
        <name>[4Fe-4S] cluster</name>
        <dbReference type="ChEBI" id="CHEBI:49883"/>
        <label>2</label>
    </ligand>
</feature>
<feature type="binding site" evidence="1">
    <location>
        <position position="110"/>
    </location>
    <ligand>
        <name>[4Fe-4S] cluster</name>
        <dbReference type="ChEBI" id="CHEBI:49883"/>
        <label>2</label>
    </ligand>
</feature>
<feature type="binding site" evidence="1">
    <location>
        <position position="114"/>
    </location>
    <ligand>
        <name>[4Fe-4S] cluster</name>
        <dbReference type="ChEBI" id="CHEBI:49883"/>
        <label>1</label>
    </ligand>
</feature>
<name>NDHI_RENSL</name>
<accession>Q8HVL8</accession>
<comment type="function">
    <text evidence="1">NDH shuttles electrons from NAD(P)H:plastoquinone, via FMN and iron-sulfur (Fe-S) centers, to quinones in the photosynthetic chain and possibly in a chloroplast respiratory chain. The immediate electron acceptor for the enzyme in this species is believed to be plastoquinone. Couples the redox reaction to proton translocation, and thus conserves the redox energy in a proton gradient.</text>
</comment>
<comment type="catalytic activity">
    <reaction evidence="1">
        <text>a plastoquinone + NADH + (n+1) H(+)(in) = a plastoquinol + NAD(+) + n H(+)(out)</text>
        <dbReference type="Rhea" id="RHEA:42608"/>
        <dbReference type="Rhea" id="RHEA-COMP:9561"/>
        <dbReference type="Rhea" id="RHEA-COMP:9562"/>
        <dbReference type="ChEBI" id="CHEBI:15378"/>
        <dbReference type="ChEBI" id="CHEBI:17757"/>
        <dbReference type="ChEBI" id="CHEBI:57540"/>
        <dbReference type="ChEBI" id="CHEBI:57945"/>
        <dbReference type="ChEBI" id="CHEBI:62192"/>
    </reaction>
</comment>
<comment type="catalytic activity">
    <reaction evidence="1">
        <text>a plastoquinone + NADPH + (n+1) H(+)(in) = a plastoquinol + NADP(+) + n H(+)(out)</text>
        <dbReference type="Rhea" id="RHEA:42612"/>
        <dbReference type="Rhea" id="RHEA-COMP:9561"/>
        <dbReference type="Rhea" id="RHEA-COMP:9562"/>
        <dbReference type="ChEBI" id="CHEBI:15378"/>
        <dbReference type="ChEBI" id="CHEBI:17757"/>
        <dbReference type="ChEBI" id="CHEBI:57783"/>
        <dbReference type="ChEBI" id="CHEBI:58349"/>
        <dbReference type="ChEBI" id="CHEBI:62192"/>
    </reaction>
</comment>
<comment type="cofactor">
    <cofactor evidence="1">
        <name>[4Fe-4S] cluster</name>
        <dbReference type="ChEBI" id="CHEBI:49883"/>
    </cofactor>
    <text evidence="1">Binds 2 [4Fe-4S] clusters per subunit.</text>
</comment>
<comment type="subunit">
    <text evidence="1">NDH is composed of at least 16 different subunits, 5 of which are encoded in the nucleus.</text>
</comment>
<comment type="subcellular location">
    <subcellularLocation>
        <location evidence="1">Plastid</location>
        <location evidence="1">Chloroplast thylakoid membrane</location>
        <topology evidence="1">Peripheral membrane protein</topology>
    </subcellularLocation>
</comment>
<comment type="similarity">
    <text evidence="1">Belongs to the complex I 23 kDa subunit family.</text>
</comment>
<proteinExistence type="inferred from homology"/>
<reference key="1">
    <citation type="submission" date="2003-01" db="EMBL/GenBank/DDBJ databases">
        <title>Chloroplast DNA phylogeny of tribe Heliantheae (Asteraceae).</title>
        <authorList>
            <person name="Panero J.L."/>
            <person name="Baldwin B.G."/>
            <person name="Schilling E.E."/>
            <person name="Clevinger J.A."/>
        </authorList>
    </citation>
    <scope>NUCLEOTIDE SEQUENCE [GENOMIC DNA]</scope>
</reference>
<evidence type="ECO:0000255" key="1">
    <source>
        <dbReference type="HAMAP-Rule" id="MF_01351"/>
    </source>
</evidence>
<keyword id="KW-0004">4Fe-4S</keyword>
<keyword id="KW-0150">Chloroplast</keyword>
<keyword id="KW-0408">Iron</keyword>
<keyword id="KW-0411">Iron-sulfur</keyword>
<keyword id="KW-0472">Membrane</keyword>
<keyword id="KW-0479">Metal-binding</keyword>
<keyword id="KW-0520">NAD</keyword>
<keyword id="KW-0521">NADP</keyword>
<keyword id="KW-0934">Plastid</keyword>
<keyword id="KW-0618">Plastoquinone</keyword>
<keyword id="KW-0874">Quinone</keyword>
<keyword id="KW-0677">Repeat</keyword>
<keyword id="KW-0793">Thylakoid</keyword>
<keyword id="KW-1278">Translocase</keyword>
<sequence>MFPMVTEFMNYGQQTIRAARYIGQGFMITLSHANRLPVTIQYPYEKLITSERFRGRIHFEFDKCIACEVCVRVCPIDLPVVDWKLETDIRKKRLLNYSIDFGICIFCGNCVEYCPTNCLSMTEEYELSTYDRHELNYNQIALGRLPMSIIDDYTIRTIFNLPEIKP</sequence>
<geneLocation type="chloroplast"/>
<dbReference type="EC" id="7.1.1.-" evidence="1"/>
<dbReference type="EMBL" id="AF383845">
    <property type="protein sequence ID" value="AAN61786.1"/>
    <property type="molecule type" value="Genomic_DNA"/>
</dbReference>
<dbReference type="SMR" id="Q8HVL8"/>
<dbReference type="GO" id="GO:0009535">
    <property type="term" value="C:chloroplast thylakoid membrane"/>
    <property type="evidence" value="ECO:0007669"/>
    <property type="project" value="UniProtKB-SubCell"/>
</dbReference>
<dbReference type="GO" id="GO:0051539">
    <property type="term" value="F:4 iron, 4 sulfur cluster binding"/>
    <property type="evidence" value="ECO:0007669"/>
    <property type="project" value="UniProtKB-KW"/>
</dbReference>
<dbReference type="GO" id="GO:0005506">
    <property type="term" value="F:iron ion binding"/>
    <property type="evidence" value="ECO:0007669"/>
    <property type="project" value="UniProtKB-UniRule"/>
</dbReference>
<dbReference type="GO" id="GO:0008137">
    <property type="term" value="F:NADH dehydrogenase (ubiquinone) activity"/>
    <property type="evidence" value="ECO:0007669"/>
    <property type="project" value="InterPro"/>
</dbReference>
<dbReference type="GO" id="GO:0048038">
    <property type="term" value="F:quinone binding"/>
    <property type="evidence" value="ECO:0007669"/>
    <property type="project" value="UniProtKB-KW"/>
</dbReference>
<dbReference type="GO" id="GO:0019684">
    <property type="term" value="P:photosynthesis, light reaction"/>
    <property type="evidence" value="ECO:0007669"/>
    <property type="project" value="UniProtKB-UniRule"/>
</dbReference>
<dbReference type="FunFam" id="3.30.70.3270:FF:000006">
    <property type="entry name" value="NAD(P)H-quinone oxidoreductase subunit I, chloroplastic"/>
    <property type="match status" value="1"/>
</dbReference>
<dbReference type="Gene3D" id="3.30.70.3270">
    <property type="match status" value="1"/>
</dbReference>
<dbReference type="HAMAP" id="MF_01351">
    <property type="entry name" value="NDH1_NuoI"/>
    <property type="match status" value="1"/>
</dbReference>
<dbReference type="InterPro" id="IPR017896">
    <property type="entry name" value="4Fe4S_Fe-S-bd"/>
</dbReference>
<dbReference type="InterPro" id="IPR017900">
    <property type="entry name" value="4Fe4S_Fe_S_CS"/>
</dbReference>
<dbReference type="InterPro" id="IPR010226">
    <property type="entry name" value="NADH_quinone_OxRdtase_chainI"/>
</dbReference>
<dbReference type="InterPro" id="IPR004497">
    <property type="entry name" value="NDHI"/>
</dbReference>
<dbReference type="NCBIfam" id="TIGR00403">
    <property type="entry name" value="ndhI"/>
    <property type="match status" value="1"/>
</dbReference>
<dbReference type="NCBIfam" id="TIGR01971">
    <property type="entry name" value="NuoI"/>
    <property type="match status" value="1"/>
</dbReference>
<dbReference type="NCBIfam" id="NF004537">
    <property type="entry name" value="PRK05888.1-3"/>
    <property type="match status" value="1"/>
</dbReference>
<dbReference type="PANTHER" id="PTHR47275">
    <property type="entry name" value="NAD(P)H-QUINONE OXIDOREDUCTASE SUBUNIT I, CHLOROPLASTIC"/>
    <property type="match status" value="1"/>
</dbReference>
<dbReference type="PANTHER" id="PTHR47275:SF1">
    <property type="entry name" value="NAD(P)H-QUINONE OXIDOREDUCTASE SUBUNIT I, CHLOROPLASTIC"/>
    <property type="match status" value="1"/>
</dbReference>
<dbReference type="Pfam" id="PF00037">
    <property type="entry name" value="Fer4"/>
    <property type="match status" value="2"/>
</dbReference>
<dbReference type="SUPFAM" id="SSF54862">
    <property type="entry name" value="4Fe-4S ferredoxins"/>
    <property type="match status" value="1"/>
</dbReference>
<dbReference type="PROSITE" id="PS00198">
    <property type="entry name" value="4FE4S_FER_1"/>
    <property type="match status" value="2"/>
</dbReference>
<dbReference type="PROSITE" id="PS51379">
    <property type="entry name" value="4FE4S_FER_2"/>
    <property type="match status" value="2"/>
</dbReference>
<protein>
    <recommendedName>
        <fullName evidence="1">NAD(P)H-quinone oxidoreductase subunit I, chloroplastic</fullName>
        <ecNumber evidence="1">7.1.1.-</ecNumber>
    </recommendedName>
    <alternativeName>
        <fullName evidence="1">NAD(P)H dehydrogenase subunit I</fullName>
        <shortName evidence="1">NDH subunit I</shortName>
    </alternativeName>
    <alternativeName>
        <fullName evidence="1">NADH-plastoquinone oxidoreductase subunit I</fullName>
    </alternativeName>
</protein>
<gene>
    <name evidence="1" type="primary">ndhI</name>
</gene>